<dbReference type="EC" id="1.17.1.8" evidence="1"/>
<dbReference type="EMBL" id="CP000095">
    <property type="protein sequence ID" value="AAZ57871.1"/>
    <property type="molecule type" value="Genomic_DNA"/>
</dbReference>
<dbReference type="RefSeq" id="WP_011293913.1">
    <property type="nucleotide sequence ID" value="NC_007335.2"/>
</dbReference>
<dbReference type="SMR" id="Q46KV7"/>
<dbReference type="STRING" id="59920.PMN2A_0379"/>
<dbReference type="KEGG" id="pmn:PMN2A_0379"/>
<dbReference type="HOGENOM" id="CLU_047479_0_1_3"/>
<dbReference type="OrthoDB" id="9790352at2"/>
<dbReference type="PhylomeDB" id="Q46KV7"/>
<dbReference type="UniPathway" id="UPA00034">
    <property type="reaction ID" value="UER00018"/>
</dbReference>
<dbReference type="Proteomes" id="UP000002535">
    <property type="component" value="Chromosome"/>
</dbReference>
<dbReference type="GO" id="GO:0005829">
    <property type="term" value="C:cytosol"/>
    <property type="evidence" value="ECO:0007669"/>
    <property type="project" value="TreeGrafter"/>
</dbReference>
<dbReference type="GO" id="GO:0008839">
    <property type="term" value="F:4-hydroxy-tetrahydrodipicolinate reductase"/>
    <property type="evidence" value="ECO:0007669"/>
    <property type="project" value="UniProtKB-EC"/>
</dbReference>
<dbReference type="GO" id="GO:0051287">
    <property type="term" value="F:NAD binding"/>
    <property type="evidence" value="ECO:0007669"/>
    <property type="project" value="UniProtKB-UniRule"/>
</dbReference>
<dbReference type="GO" id="GO:0050661">
    <property type="term" value="F:NADP binding"/>
    <property type="evidence" value="ECO:0007669"/>
    <property type="project" value="UniProtKB-UniRule"/>
</dbReference>
<dbReference type="GO" id="GO:0016726">
    <property type="term" value="F:oxidoreductase activity, acting on CH or CH2 groups, NAD or NADP as acceptor"/>
    <property type="evidence" value="ECO:0007669"/>
    <property type="project" value="UniProtKB-UniRule"/>
</dbReference>
<dbReference type="GO" id="GO:0019877">
    <property type="term" value="P:diaminopimelate biosynthetic process"/>
    <property type="evidence" value="ECO:0007669"/>
    <property type="project" value="UniProtKB-UniRule"/>
</dbReference>
<dbReference type="GO" id="GO:0009089">
    <property type="term" value="P:lysine biosynthetic process via diaminopimelate"/>
    <property type="evidence" value="ECO:0007669"/>
    <property type="project" value="UniProtKB-UniRule"/>
</dbReference>
<dbReference type="CDD" id="cd02274">
    <property type="entry name" value="DHDPR_N"/>
    <property type="match status" value="1"/>
</dbReference>
<dbReference type="FunFam" id="3.30.360.10:FF:000009">
    <property type="entry name" value="4-hydroxy-tetrahydrodipicolinate reductase"/>
    <property type="match status" value="1"/>
</dbReference>
<dbReference type="Gene3D" id="3.30.360.10">
    <property type="entry name" value="Dihydrodipicolinate Reductase, domain 2"/>
    <property type="match status" value="1"/>
</dbReference>
<dbReference type="Gene3D" id="3.40.50.720">
    <property type="entry name" value="NAD(P)-binding Rossmann-like Domain"/>
    <property type="match status" value="1"/>
</dbReference>
<dbReference type="HAMAP" id="MF_00102">
    <property type="entry name" value="DapB"/>
    <property type="match status" value="1"/>
</dbReference>
<dbReference type="InterPro" id="IPR022663">
    <property type="entry name" value="DapB_C"/>
</dbReference>
<dbReference type="InterPro" id="IPR000846">
    <property type="entry name" value="DapB_N"/>
</dbReference>
<dbReference type="InterPro" id="IPR022664">
    <property type="entry name" value="DapB_N_CS"/>
</dbReference>
<dbReference type="InterPro" id="IPR023940">
    <property type="entry name" value="DHDPR_bac"/>
</dbReference>
<dbReference type="InterPro" id="IPR036291">
    <property type="entry name" value="NAD(P)-bd_dom_sf"/>
</dbReference>
<dbReference type="NCBIfam" id="TIGR00036">
    <property type="entry name" value="dapB"/>
    <property type="match status" value="1"/>
</dbReference>
<dbReference type="PANTHER" id="PTHR20836:SF0">
    <property type="entry name" value="4-HYDROXY-TETRAHYDRODIPICOLINATE REDUCTASE 1, CHLOROPLASTIC-RELATED"/>
    <property type="match status" value="1"/>
</dbReference>
<dbReference type="PANTHER" id="PTHR20836">
    <property type="entry name" value="DIHYDRODIPICOLINATE REDUCTASE"/>
    <property type="match status" value="1"/>
</dbReference>
<dbReference type="Pfam" id="PF05173">
    <property type="entry name" value="DapB_C"/>
    <property type="match status" value="1"/>
</dbReference>
<dbReference type="Pfam" id="PF01113">
    <property type="entry name" value="DapB_N"/>
    <property type="match status" value="1"/>
</dbReference>
<dbReference type="PIRSF" id="PIRSF000161">
    <property type="entry name" value="DHPR"/>
    <property type="match status" value="1"/>
</dbReference>
<dbReference type="SUPFAM" id="SSF55347">
    <property type="entry name" value="Glyceraldehyde-3-phosphate dehydrogenase-like, C-terminal domain"/>
    <property type="match status" value="1"/>
</dbReference>
<dbReference type="SUPFAM" id="SSF51735">
    <property type="entry name" value="NAD(P)-binding Rossmann-fold domains"/>
    <property type="match status" value="1"/>
</dbReference>
<dbReference type="PROSITE" id="PS01298">
    <property type="entry name" value="DAPB"/>
    <property type="match status" value="1"/>
</dbReference>
<name>DAPB_PROMT</name>
<sequence length="282" mass="30280">MSSANQSIPVLVAGAMGRMGSEVVKAINSSKDFQLVGAIDNQKDKEGQDIGSLLGLGELDVFLSSDFEGSLCAASQNVPKDGSNNGAVLVDFTHPKFAYKHTRTSIAYGVHPVIGTTGITADQLDDLSKFADKASLGSAIIPNFSVGMVLLQQAAAAAARFYEFAELTEMHHNKKADAPSGTCIKTAELIEEQRSNFNRSFVEEEESIKGSRGGSRASGLRLHSVRLPGLVAHQQVMFGSNGETYELSHNTIDRSAYMPGVLLVIKKIRSFNKLVYGLEKIL</sequence>
<comment type="function">
    <text evidence="1">Catalyzes the conversion of 4-hydroxy-tetrahydrodipicolinate (HTPA) to tetrahydrodipicolinate.</text>
</comment>
<comment type="catalytic activity">
    <reaction evidence="1">
        <text>(S)-2,3,4,5-tetrahydrodipicolinate + NAD(+) + H2O = (2S,4S)-4-hydroxy-2,3,4,5-tetrahydrodipicolinate + NADH + H(+)</text>
        <dbReference type="Rhea" id="RHEA:35323"/>
        <dbReference type="ChEBI" id="CHEBI:15377"/>
        <dbReference type="ChEBI" id="CHEBI:15378"/>
        <dbReference type="ChEBI" id="CHEBI:16845"/>
        <dbReference type="ChEBI" id="CHEBI:57540"/>
        <dbReference type="ChEBI" id="CHEBI:57945"/>
        <dbReference type="ChEBI" id="CHEBI:67139"/>
        <dbReference type="EC" id="1.17.1.8"/>
    </reaction>
</comment>
<comment type="catalytic activity">
    <reaction evidence="1">
        <text>(S)-2,3,4,5-tetrahydrodipicolinate + NADP(+) + H2O = (2S,4S)-4-hydroxy-2,3,4,5-tetrahydrodipicolinate + NADPH + H(+)</text>
        <dbReference type="Rhea" id="RHEA:35331"/>
        <dbReference type="ChEBI" id="CHEBI:15377"/>
        <dbReference type="ChEBI" id="CHEBI:15378"/>
        <dbReference type="ChEBI" id="CHEBI:16845"/>
        <dbReference type="ChEBI" id="CHEBI:57783"/>
        <dbReference type="ChEBI" id="CHEBI:58349"/>
        <dbReference type="ChEBI" id="CHEBI:67139"/>
        <dbReference type="EC" id="1.17.1.8"/>
    </reaction>
</comment>
<comment type="pathway">
    <text evidence="1">Amino-acid biosynthesis; L-lysine biosynthesis via DAP pathway; (S)-tetrahydrodipicolinate from L-aspartate: step 4/4.</text>
</comment>
<comment type="subcellular location">
    <subcellularLocation>
        <location evidence="1">Cytoplasm</location>
    </subcellularLocation>
</comment>
<comment type="similarity">
    <text evidence="1">Belongs to the DapB family.</text>
</comment>
<comment type="caution">
    <text evidence="2">Was originally thought to be a dihydrodipicolinate reductase (DHDPR), catalyzing the conversion of dihydrodipicolinate to tetrahydrodipicolinate. However, it was shown in E.coli that the substrate of the enzymatic reaction is not dihydrodipicolinate (DHDP) but in fact (2S,4S)-4-hydroxy-2,3,4,5-tetrahydrodipicolinic acid (HTPA), the product released by the DapA-catalyzed reaction.</text>
</comment>
<gene>
    <name evidence="1" type="primary">dapB</name>
    <name type="ordered locus">PMN2A_0379</name>
</gene>
<evidence type="ECO:0000255" key="1">
    <source>
        <dbReference type="HAMAP-Rule" id="MF_00102"/>
    </source>
</evidence>
<evidence type="ECO:0000305" key="2"/>
<feature type="chain" id="PRO_0000228371" description="4-hydroxy-tetrahydrodipicolinate reductase">
    <location>
        <begin position="1"/>
        <end position="282"/>
    </location>
</feature>
<feature type="active site" description="Proton donor/acceptor" evidence="1">
    <location>
        <position position="171"/>
    </location>
</feature>
<feature type="active site" description="Proton donor" evidence="1">
    <location>
        <position position="175"/>
    </location>
</feature>
<feature type="binding site" evidence="1">
    <location>
        <begin position="14"/>
        <end position="19"/>
    </location>
    <ligand>
        <name>NAD(+)</name>
        <dbReference type="ChEBI" id="CHEBI:57540"/>
    </ligand>
</feature>
<feature type="binding site" evidence="1">
    <location>
        <begin position="115"/>
        <end position="117"/>
    </location>
    <ligand>
        <name>NAD(+)</name>
        <dbReference type="ChEBI" id="CHEBI:57540"/>
    </ligand>
</feature>
<feature type="binding site" evidence="1">
    <location>
        <position position="172"/>
    </location>
    <ligand>
        <name>(S)-2,3,4,5-tetrahydrodipicolinate</name>
        <dbReference type="ChEBI" id="CHEBI:16845"/>
    </ligand>
</feature>
<feature type="binding site" evidence="1">
    <location>
        <begin position="181"/>
        <end position="182"/>
    </location>
    <ligand>
        <name>(S)-2,3,4,5-tetrahydrodipicolinate</name>
        <dbReference type="ChEBI" id="CHEBI:16845"/>
    </ligand>
</feature>
<proteinExistence type="inferred from homology"/>
<accession>Q46KV7</accession>
<protein>
    <recommendedName>
        <fullName evidence="1">4-hydroxy-tetrahydrodipicolinate reductase</fullName>
        <shortName evidence="1">HTPA reductase</shortName>
        <ecNumber evidence="1">1.17.1.8</ecNumber>
    </recommendedName>
</protein>
<organism>
    <name type="scientific">Prochlorococcus marinus (strain NATL2A)</name>
    <dbReference type="NCBI Taxonomy" id="59920"/>
    <lineage>
        <taxon>Bacteria</taxon>
        <taxon>Bacillati</taxon>
        <taxon>Cyanobacteriota</taxon>
        <taxon>Cyanophyceae</taxon>
        <taxon>Synechococcales</taxon>
        <taxon>Prochlorococcaceae</taxon>
        <taxon>Prochlorococcus</taxon>
    </lineage>
</organism>
<keyword id="KW-0028">Amino-acid biosynthesis</keyword>
<keyword id="KW-0963">Cytoplasm</keyword>
<keyword id="KW-0220">Diaminopimelate biosynthesis</keyword>
<keyword id="KW-0457">Lysine biosynthesis</keyword>
<keyword id="KW-0520">NAD</keyword>
<keyword id="KW-0521">NADP</keyword>
<keyword id="KW-0560">Oxidoreductase</keyword>
<keyword id="KW-1185">Reference proteome</keyword>
<reference key="1">
    <citation type="journal article" date="2007" name="PLoS Genet.">
        <title>Patterns and implications of gene gain and loss in the evolution of Prochlorococcus.</title>
        <authorList>
            <person name="Kettler G.C."/>
            <person name="Martiny A.C."/>
            <person name="Huang K."/>
            <person name="Zucker J."/>
            <person name="Coleman M.L."/>
            <person name="Rodrigue S."/>
            <person name="Chen F."/>
            <person name="Lapidus A."/>
            <person name="Ferriera S."/>
            <person name="Johnson J."/>
            <person name="Steglich C."/>
            <person name="Church G.M."/>
            <person name="Richardson P."/>
            <person name="Chisholm S.W."/>
        </authorList>
    </citation>
    <scope>NUCLEOTIDE SEQUENCE [LARGE SCALE GENOMIC DNA]</scope>
    <source>
        <strain>NATL2A</strain>
    </source>
</reference>